<evidence type="ECO:0000255" key="1">
    <source>
        <dbReference type="HAMAP-Rule" id="MF_01411"/>
    </source>
</evidence>
<gene>
    <name evidence="1" type="primary">lptD</name>
    <name type="synonym">imp</name>
    <name type="synonym">ostA</name>
    <name type="ordered locus">Ecok1_00490</name>
    <name type="ORF">APECO1_1928</name>
</gene>
<protein>
    <recommendedName>
        <fullName evidence="1">LPS-assembly protein LptD</fullName>
    </recommendedName>
</protein>
<sequence>MKKRIPTLLATMIATALYSQQGLAADLASQCMLGVPSYDRPLVQGDTNDLPVTINADHAKGDYPDDAVFTGSVDIMQGNSRLQADEVQLHQKEAPGQPEPVRTVDALGNVHYDDNQVILKGPKGWANLNTKDTNVWEGDYQMVGRQGRGKADLMKQRGENRYTILDNGSFTSCLPGSDTWSVVGSEIIHDREEQVAEIWNARFKVGPVPIFYSPYLQLPVGDKRRSGFLIPNAKYTTTNYFEFYLPYYWNIAPNMDATITPHYMHRRGNIMWENEFRYLSQAGAGLMELDYLPSDKVYKDEHPNDDSSRRWLFYWNHSGVMDQVWRFNVDYTKVSDPSYFNDFDNKYGSSTDGYATQKFSVGYAVQNFNATVSTKQFQVFSEQNTSSYSAEPQLDVNYYQNDVGPFDTRIYGQAVHFVNTRDDMPEATRVHLEPTINLPLSNNWGSINTEAKLLATHYQQTNLDWYNSRNTTKLAESANRVMPQFKVDGRMVFERDMEMLAPGYTQTLEPRAQYLYVPYRDQSKIYNYDSSLLQSDYSGLFRDRTYGGLDRIASANQVTTGVTSRIYDDAAVERFNISVGQIYYFTESRTGDDNITWENDDKTGSLVWAGDTYWRISDRWGLRGGIQYDTRLDNVATSNSSIEYRRDEDRLVQLNYRYASPEYIQATLPKYYSTAEQYKNGISQVGAVASWPIADRWSIVGAYYYDTNANKQADSMLGVQYSSCCYAIRVGYERKLNGWDNDKQHAVYDNAIGFNIELRGLSSNYGLGTQEMLRSNILPYQNTL</sequence>
<reference key="1">
    <citation type="journal article" date="2007" name="J. Bacteriol.">
        <title>The genome sequence of avian pathogenic Escherichia coli strain O1:K1:H7 shares strong similarities with human extraintestinal pathogenic E. coli genomes.</title>
        <authorList>
            <person name="Johnson T.J."/>
            <person name="Kariyawasam S."/>
            <person name="Wannemuehler Y."/>
            <person name="Mangiamele P."/>
            <person name="Johnson S.J."/>
            <person name="Doetkott C."/>
            <person name="Skyberg J.A."/>
            <person name="Lynne A.M."/>
            <person name="Johnson J.R."/>
            <person name="Nolan L.K."/>
        </authorList>
    </citation>
    <scope>NUCLEOTIDE SEQUENCE [LARGE SCALE GENOMIC DNA]</scope>
</reference>
<keyword id="KW-0998">Cell outer membrane</keyword>
<keyword id="KW-1015">Disulfide bond</keyword>
<keyword id="KW-0472">Membrane</keyword>
<keyword id="KW-1185">Reference proteome</keyword>
<keyword id="KW-0732">Signal</keyword>
<accession>A1A7A3</accession>
<proteinExistence type="inferred from homology"/>
<dbReference type="EMBL" id="CP000468">
    <property type="protein sequence ID" value="ABI99542.1"/>
    <property type="molecule type" value="Genomic_DNA"/>
</dbReference>
<dbReference type="RefSeq" id="WP_000746170.1">
    <property type="nucleotide sequence ID" value="NZ_CADILS010000013.1"/>
</dbReference>
<dbReference type="SMR" id="A1A7A3"/>
<dbReference type="KEGG" id="ecv:APECO1_1928"/>
<dbReference type="HOGENOM" id="CLU_009039_2_0_6"/>
<dbReference type="Proteomes" id="UP000008216">
    <property type="component" value="Chromosome"/>
</dbReference>
<dbReference type="GO" id="GO:0009279">
    <property type="term" value="C:cell outer membrane"/>
    <property type="evidence" value="ECO:0007669"/>
    <property type="project" value="UniProtKB-SubCell"/>
</dbReference>
<dbReference type="GO" id="GO:1990351">
    <property type="term" value="C:transporter complex"/>
    <property type="evidence" value="ECO:0007669"/>
    <property type="project" value="TreeGrafter"/>
</dbReference>
<dbReference type="GO" id="GO:0043165">
    <property type="term" value="P:Gram-negative-bacterium-type cell outer membrane assembly"/>
    <property type="evidence" value="ECO:0007669"/>
    <property type="project" value="UniProtKB-UniRule"/>
</dbReference>
<dbReference type="GO" id="GO:0015920">
    <property type="term" value="P:lipopolysaccharide transport"/>
    <property type="evidence" value="ECO:0007669"/>
    <property type="project" value="InterPro"/>
</dbReference>
<dbReference type="FunFam" id="2.60.450.10:FF:000003">
    <property type="entry name" value="LPS-assembly protein LptD"/>
    <property type="match status" value="1"/>
</dbReference>
<dbReference type="Gene3D" id="2.60.450.10">
    <property type="entry name" value="Lipopolysaccharide (LPS) transport protein A like domain"/>
    <property type="match status" value="1"/>
</dbReference>
<dbReference type="HAMAP" id="MF_01411">
    <property type="entry name" value="LPS_assembly_LptD"/>
    <property type="match status" value="1"/>
</dbReference>
<dbReference type="InterPro" id="IPR020889">
    <property type="entry name" value="LipoPS_assembly_LptD"/>
</dbReference>
<dbReference type="InterPro" id="IPR050218">
    <property type="entry name" value="LptD"/>
</dbReference>
<dbReference type="InterPro" id="IPR007543">
    <property type="entry name" value="LptD_C"/>
</dbReference>
<dbReference type="InterPro" id="IPR005653">
    <property type="entry name" value="OstA-like_N"/>
</dbReference>
<dbReference type="NCBIfam" id="NF002997">
    <property type="entry name" value="PRK03761.1"/>
    <property type="match status" value="1"/>
</dbReference>
<dbReference type="PANTHER" id="PTHR30189">
    <property type="entry name" value="LPS-ASSEMBLY PROTEIN"/>
    <property type="match status" value="1"/>
</dbReference>
<dbReference type="PANTHER" id="PTHR30189:SF1">
    <property type="entry name" value="LPS-ASSEMBLY PROTEIN LPTD"/>
    <property type="match status" value="1"/>
</dbReference>
<dbReference type="Pfam" id="PF04453">
    <property type="entry name" value="LptD"/>
    <property type="match status" value="1"/>
</dbReference>
<dbReference type="Pfam" id="PF03968">
    <property type="entry name" value="LptD_N"/>
    <property type="match status" value="1"/>
</dbReference>
<name>LPTD_ECOK1</name>
<feature type="signal peptide" evidence="1">
    <location>
        <begin position="1"/>
        <end position="24"/>
    </location>
</feature>
<feature type="chain" id="PRO_0000281602" description="LPS-assembly protein LptD">
    <location>
        <begin position="25"/>
        <end position="784"/>
    </location>
</feature>
<feature type="disulfide bond" evidence="1">
    <location>
        <begin position="31"/>
        <end position="724"/>
    </location>
</feature>
<feature type="disulfide bond" evidence="1">
    <location>
        <begin position="173"/>
        <end position="725"/>
    </location>
</feature>
<comment type="function">
    <text evidence="1">Together with LptE, is involved in the assembly of lipopolysaccharide (LPS) at the surface of the outer membrane.</text>
</comment>
<comment type="subunit">
    <text evidence="1">Component of the lipopolysaccharide transport and assembly complex. Interacts with LptE and LptA.</text>
</comment>
<comment type="subcellular location">
    <subcellularLocation>
        <location evidence="1">Cell outer membrane</location>
    </subcellularLocation>
</comment>
<comment type="PTM">
    <text evidence="1">Contains two intramolecular disulfide bonds.</text>
</comment>
<comment type="similarity">
    <text evidence="1">Belongs to the LptD family.</text>
</comment>
<organism>
    <name type="scientific">Escherichia coli O1:K1 / APEC</name>
    <dbReference type="NCBI Taxonomy" id="405955"/>
    <lineage>
        <taxon>Bacteria</taxon>
        <taxon>Pseudomonadati</taxon>
        <taxon>Pseudomonadota</taxon>
        <taxon>Gammaproteobacteria</taxon>
        <taxon>Enterobacterales</taxon>
        <taxon>Enterobacteriaceae</taxon>
        <taxon>Escherichia</taxon>
    </lineage>
</organism>